<sequence length="646" mass="74196">MIKITFPDGNVKEFEAGVTTFEIAKSISPSLAKKTLAGKVNGKLIDATRAINEDSNFEIVTPDHEDALGILRHSAAHLFAQAAKRHFPDIHLGVGPAIQDGFYYDTDNEAGQISNDDLATIEAEMKKIVKENFKSERKEVSKEEAKEIFANDPYKLELIEEHNEDEGGLTIYTQGEYTDLCRGPHVPSTGVIKFFHLLNVAGAYWRGNSDNKMMQRIYGTAWFTKEELEENLKLREEAKERDHRKLGRELDLFFNDAELGAGTAYWLPAGATIRRIIERFVVDQEVKNGYQHVITPVMMNLNTYKQSGHWQHYHEDMYPPMDMGDGEEMELRPMNCPSHIAIYKHHVHSYRELPIRIAEFGMMHRYEKSGALSGLQRVREMTLNDGHTFVMLEQVQEEFSKILQLIMDMYRDFGINDYSFRLSYRDPKDTVKYFPDDEMWEKSQAMLKATMDDMNLDYVEAEGEAAFYGPKLDIQVKTALGNEETLSTIQLDFLNPENFDISYIGADGEKHRPVMIHRGVISTLERFIAYLIEVYKGAFPTWLAPTQATIIPVNNEIHADYAWKIQRELQDKGFRVVVDEANEKMGWKIRQSQTHKIPYQIVIGDQEQADGTVNIRRYGSKETKVIPLEEFIENISADVANFSRVD</sequence>
<protein>
    <recommendedName>
        <fullName evidence="1">Threonine--tRNA ligase</fullName>
        <ecNumber evidence="1">6.1.1.3</ecNumber>
    </recommendedName>
    <alternativeName>
        <fullName evidence="1">Threonyl-tRNA synthetase</fullName>
        <shortName evidence="1">ThrRS</shortName>
    </alternativeName>
</protein>
<organism>
    <name type="scientific">Lactococcus lactis subsp. lactis (strain IL1403)</name>
    <name type="common">Streptococcus lactis</name>
    <dbReference type="NCBI Taxonomy" id="272623"/>
    <lineage>
        <taxon>Bacteria</taxon>
        <taxon>Bacillati</taxon>
        <taxon>Bacillota</taxon>
        <taxon>Bacilli</taxon>
        <taxon>Lactobacillales</taxon>
        <taxon>Streptococcaceae</taxon>
        <taxon>Lactococcus</taxon>
    </lineage>
</organism>
<keyword id="KW-0030">Aminoacyl-tRNA synthetase</keyword>
<keyword id="KW-0067">ATP-binding</keyword>
<keyword id="KW-0963">Cytoplasm</keyword>
<keyword id="KW-0436">Ligase</keyword>
<keyword id="KW-0479">Metal-binding</keyword>
<keyword id="KW-0547">Nucleotide-binding</keyword>
<keyword id="KW-0648">Protein biosynthesis</keyword>
<keyword id="KW-1185">Reference proteome</keyword>
<keyword id="KW-0694">RNA-binding</keyword>
<keyword id="KW-0820">tRNA-binding</keyword>
<keyword id="KW-0862">Zinc</keyword>
<reference key="1">
    <citation type="journal article" date="2001" name="Genome Res.">
        <title>The complete genome sequence of the lactic acid bacterium Lactococcus lactis ssp. lactis IL1403.</title>
        <authorList>
            <person name="Bolotin A."/>
            <person name="Wincker P."/>
            <person name="Mauger S."/>
            <person name="Jaillon O."/>
            <person name="Malarme K."/>
            <person name="Weissenbach J."/>
            <person name="Ehrlich S.D."/>
            <person name="Sorokin A."/>
        </authorList>
    </citation>
    <scope>NUCLEOTIDE SEQUENCE [LARGE SCALE GENOMIC DNA]</scope>
    <source>
        <strain>IL1403</strain>
    </source>
</reference>
<gene>
    <name evidence="1" type="primary">thrS</name>
    <name type="ordered locus">LL1911</name>
    <name type="ORF">L0357</name>
</gene>
<proteinExistence type="inferred from homology"/>
<name>SYT_LACLA</name>
<evidence type="ECO:0000255" key="1">
    <source>
        <dbReference type="HAMAP-Rule" id="MF_00184"/>
    </source>
</evidence>
<evidence type="ECO:0000255" key="2">
    <source>
        <dbReference type="PROSITE-ProRule" id="PRU01228"/>
    </source>
</evidence>
<feature type="chain" id="PRO_0000100994" description="Threonine--tRNA ligase">
    <location>
        <begin position="1"/>
        <end position="646"/>
    </location>
</feature>
<feature type="domain" description="TGS" evidence="2">
    <location>
        <begin position="1"/>
        <end position="61"/>
    </location>
</feature>
<feature type="region of interest" description="Catalytic" evidence="1">
    <location>
        <begin position="242"/>
        <end position="540"/>
    </location>
</feature>
<feature type="binding site" evidence="1">
    <location>
        <position position="336"/>
    </location>
    <ligand>
        <name>Zn(2+)</name>
        <dbReference type="ChEBI" id="CHEBI:29105"/>
    </ligand>
</feature>
<feature type="binding site" evidence="1">
    <location>
        <position position="387"/>
    </location>
    <ligand>
        <name>Zn(2+)</name>
        <dbReference type="ChEBI" id="CHEBI:29105"/>
    </ligand>
</feature>
<feature type="binding site" evidence="1">
    <location>
        <position position="517"/>
    </location>
    <ligand>
        <name>Zn(2+)</name>
        <dbReference type="ChEBI" id="CHEBI:29105"/>
    </ligand>
</feature>
<comment type="function">
    <text evidence="1">Catalyzes the attachment of threonine to tRNA(Thr) in a two-step reaction: L-threonine is first activated by ATP to form Thr-AMP and then transferred to the acceptor end of tRNA(Thr). Also edits incorrectly charged L-seryl-tRNA(Thr).</text>
</comment>
<comment type="catalytic activity">
    <reaction evidence="1">
        <text>tRNA(Thr) + L-threonine + ATP = L-threonyl-tRNA(Thr) + AMP + diphosphate + H(+)</text>
        <dbReference type="Rhea" id="RHEA:24624"/>
        <dbReference type="Rhea" id="RHEA-COMP:9670"/>
        <dbReference type="Rhea" id="RHEA-COMP:9704"/>
        <dbReference type="ChEBI" id="CHEBI:15378"/>
        <dbReference type="ChEBI" id="CHEBI:30616"/>
        <dbReference type="ChEBI" id="CHEBI:33019"/>
        <dbReference type="ChEBI" id="CHEBI:57926"/>
        <dbReference type="ChEBI" id="CHEBI:78442"/>
        <dbReference type="ChEBI" id="CHEBI:78534"/>
        <dbReference type="ChEBI" id="CHEBI:456215"/>
        <dbReference type="EC" id="6.1.1.3"/>
    </reaction>
</comment>
<comment type="cofactor">
    <cofactor evidence="1">
        <name>Zn(2+)</name>
        <dbReference type="ChEBI" id="CHEBI:29105"/>
    </cofactor>
    <text evidence="1">Binds 1 zinc ion per subunit.</text>
</comment>
<comment type="subunit">
    <text evidence="1">Homodimer.</text>
</comment>
<comment type="subcellular location">
    <subcellularLocation>
        <location evidence="1">Cytoplasm</location>
    </subcellularLocation>
</comment>
<comment type="similarity">
    <text evidence="1">Belongs to the class-II aminoacyl-tRNA synthetase family.</text>
</comment>
<dbReference type="EC" id="6.1.1.3" evidence="1"/>
<dbReference type="EMBL" id="AE005176">
    <property type="protein sequence ID" value="AAK06009.1"/>
    <property type="molecule type" value="Genomic_DNA"/>
</dbReference>
<dbReference type="PIR" id="G86863">
    <property type="entry name" value="G86863"/>
</dbReference>
<dbReference type="RefSeq" id="NP_268068.1">
    <property type="nucleotide sequence ID" value="NC_002662.1"/>
</dbReference>
<dbReference type="RefSeq" id="WP_004254953.1">
    <property type="nucleotide sequence ID" value="NC_002662.1"/>
</dbReference>
<dbReference type="SMR" id="Q9CED2"/>
<dbReference type="PaxDb" id="272623-L0357"/>
<dbReference type="EnsemblBacteria" id="AAK06009">
    <property type="protein sequence ID" value="AAK06009"/>
    <property type="gene ID" value="L0357"/>
</dbReference>
<dbReference type="KEGG" id="lla:L0357"/>
<dbReference type="PATRIC" id="fig|272623.7.peg.2049"/>
<dbReference type="eggNOG" id="COG0441">
    <property type="taxonomic scope" value="Bacteria"/>
</dbReference>
<dbReference type="HOGENOM" id="CLU_008554_0_1_9"/>
<dbReference type="OrthoDB" id="9802304at2"/>
<dbReference type="Proteomes" id="UP000002196">
    <property type="component" value="Chromosome"/>
</dbReference>
<dbReference type="GO" id="GO:0005737">
    <property type="term" value="C:cytoplasm"/>
    <property type="evidence" value="ECO:0007669"/>
    <property type="project" value="UniProtKB-SubCell"/>
</dbReference>
<dbReference type="GO" id="GO:0005524">
    <property type="term" value="F:ATP binding"/>
    <property type="evidence" value="ECO:0007669"/>
    <property type="project" value="UniProtKB-UniRule"/>
</dbReference>
<dbReference type="GO" id="GO:0140096">
    <property type="term" value="F:catalytic activity, acting on a protein"/>
    <property type="evidence" value="ECO:0007669"/>
    <property type="project" value="UniProtKB-ARBA"/>
</dbReference>
<dbReference type="GO" id="GO:0046872">
    <property type="term" value="F:metal ion binding"/>
    <property type="evidence" value="ECO:0007669"/>
    <property type="project" value="UniProtKB-KW"/>
</dbReference>
<dbReference type="GO" id="GO:0004829">
    <property type="term" value="F:threonine-tRNA ligase activity"/>
    <property type="evidence" value="ECO:0007669"/>
    <property type="project" value="UniProtKB-UniRule"/>
</dbReference>
<dbReference type="GO" id="GO:0016740">
    <property type="term" value="F:transferase activity"/>
    <property type="evidence" value="ECO:0007669"/>
    <property type="project" value="UniProtKB-ARBA"/>
</dbReference>
<dbReference type="GO" id="GO:0000049">
    <property type="term" value="F:tRNA binding"/>
    <property type="evidence" value="ECO:0007669"/>
    <property type="project" value="UniProtKB-KW"/>
</dbReference>
<dbReference type="GO" id="GO:0006435">
    <property type="term" value="P:threonyl-tRNA aminoacylation"/>
    <property type="evidence" value="ECO:0007669"/>
    <property type="project" value="UniProtKB-UniRule"/>
</dbReference>
<dbReference type="CDD" id="cd01667">
    <property type="entry name" value="TGS_ThrRS"/>
    <property type="match status" value="1"/>
</dbReference>
<dbReference type="CDD" id="cd00860">
    <property type="entry name" value="ThrRS_anticodon"/>
    <property type="match status" value="1"/>
</dbReference>
<dbReference type="CDD" id="cd00771">
    <property type="entry name" value="ThrRS_core"/>
    <property type="match status" value="1"/>
</dbReference>
<dbReference type="FunFam" id="3.10.20.30:FF:000005">
    <property type="entry name" value="Threonine--tRNA ligase"/>
    <property type="match status" value="1"/>
</dbReference>
<dbReference type="FunFam" id="3.30.54.20:FF:000002">
    <property type="entry name" value="Threonine--tRNA ligase"/>
    <property type="match status" value="1"/>
</dbReference>
<dbReference type="FunFam" id="3.30.930.10:FF:000002">
    <property type="entry name" value="Threonine--tRNA ligase"/>
    <property type="match status" value="1"/>
</dbReference>
<dbReference type="FunFam" id="3.40.50.800:FF:000001">
    <property type="entry name" value="Threonine--tRNA ligase"/>
    <property type="match status" value="1"/>
</dbReference>
<dbReference type="FunFam" id="3.30.980.10:FF:000005">
    <property type="entry name" value="Threonyl-tRNA synthetase, mitochondrial"/>
    <property type="match status" value="1"/>
</dbReference>
<dbReference type="Gene3D" id="3.10.20.30">
    <property type="match status" value="1"/>
</dbReference>
<dbReference type="Gene3D" id="3.30.54.20">
    <property type="match status" value="1"/>
</dbReference>
<dbReference type="Gene3D" id="3.40.50.800">
    <property type="entry name" value="Anticodon-binding domain"/>
    <property type="match status" value="1"/>
</dbReference>
<dbReference type="Gene3D" id="3.30.930.10">
    <property type="entry name" value="Bira Bifunctional Protein, Domain 2"/>
    <property type="match status" value="1"/>
</dbReference>
<dbReference type="Gene3D" id="3.30.980.10">
    <property type="entry name" value="Threonyl-trna Synthetase, Chain A, domain 2"/>
    <property type="match status" value="1"/>
</dbReference>
<dbReference type="HAMAP" id="MF_00184">
    <property type="entry name" value="Thr_tRNA_synth"/>
    <property type="match status" value="1"/>
</dbReference>
<dbReference type="InterPro" id="IPR002314">
    <property type="entry name" value="aa-tRNA-synt_IIb"/>
</dbReference>
<dbReference type="InterPro" id="IPR006195">
    <property type="entry name" value="aa-tRNA-synth_II"/>
</dbReference>
<dbReference type="InterPro" id="IPR045864">
    <property type="entry name" value="aa-tRNA-synth_II/BPL/LPL"/>
</dbReference>
<dbReference type="InterPro" id="IPR004154">
    <property type="entry name" value="Anticodon-bd"/>
</dbReference>
<dbReference type="InterPro" id="IPR036621">
    <property type="entry name" value="Anticodon-bd_dom_sf"/>
</dbReference>
<dbReference type="InterPro" id="IPR012675">
    <property type="entry name" value="Beta-grasp_dom_sf"/>
</dbReference>
<dbReference type="InterPro" id="IPR004095">
    <property type="entry name" value="TGS"/>
</dbReference>
<dbReference type="InterPro" id="IPR012676">
    <property type="entry name" value="TGS-like"/>
</dbReference>
<dbReference type="InterPro" id="IPR002320">
    <property type="entry name" value="Thr-tRNA-ligase_IIa"/>
</dbReference>
<dbReference type="InterPro" id="IPR018163">
    <property type="entry name" value="Thr/Ala-tRNA-synth_IIc_edit"/>
</dbReference>
<dbReference type="InterPro" id="IPR047246">
    <property type="entry name" value="ThrRS_anticodon"/>
</dbReference>
<dbReference type="InterPro" id="IPR033728">
    <property type="entry name" value="ThrRS_core"/>
</dbReference>
<dbReference type="InterPro" id="IPR012947">
    <property type="entry name" value="tRNA_SAD"/>
</dbReference>
<dbReference type="NCBIfam" id="TIGR00418">
    <property type="entry name" value="thrS"/>
    <property type="match status" value="1"/>
</dbReference>
<dbReference type="PANTHER" id="PTHR11451:SF56">
    <property type="entry name" value="THREONINE--TRNA LIGASE 1"/>
    <property type="match status" value="1"/>
</dbReference>
<dbReference type="PANTHER" id="PTHR11451">
    <property type="entry name" value="THREONINE-TRNA LIGASE"/>
    <property type="match status" value="1"/>
</dbReference>
<dbReference type="Pfam" id="PF03129">
    <property type="entry name" value="HGTP_anticodon"/>
    <property type="match status" value="1"/>
</dbReference>
<dbReference type="Pfam" id="PF02824">
    <property type="entry name" value="TGS"/>
    <property type="match status" value="1"/>
</dbReference>
<dbReference type="Pfam" id="PF00587">
    <property type="entry name" value="tRNA-synt_2b"/>
    <property type="match status" value="1"/>
</dbReference>
<dbReference type="Pfam" id="PF07973">
    <property type="entry name" value="tRNA_SAD"/>
    <property type="match status" value="1"/>
</dbReference>
<dbReference type="PRINTS" id="PR01047">
    <property type="entry name" value="TRNASYNTHTHR"/>
</dbReference>
<dbReference type="SMART" id="SM00863">
    <property type="entry name" value="tRNA_SAD"/>
    <property type="match status" value="1"/>
</dbReference>
<dbReference type="SUPFAM" id="SSF52954">
    <property type="entry name" value="Class II aaRS ABD-related"/>
    <property type="match status" value="1"/>
</dbReference>
<dbReference type="SUPFAM" id="SSF55681">
    <property type="entry name" value="Class II aaRS and biotin synthetases"/>
    <property type="match status" value="1"/>
</dbReference>
<dbReference type="SUPFAM" id="SSF81271">
    <property type="entry name" value="TGS-like"/>
    <property type="match status" value="1"/>
</dbReference>
<dbReference type="SUPFAM" id="SSF55186">
    <property type="entry name" value="ThrRS/AlaRS common domain"/>
    <property type="match status" value="1"/>
</dbReference>
<dbReference type="PROSITE" id="PS50862">
    <property type="entry name" value="AA_TRNA_LIGASE_II"/>
    <property type="match status" value="1"/>
</dbReference>
<dbReference type="PROSITE" id="PS51880">
    <property type="entry name" value="TGS"/>
    <property type="match status" value="1"/>
</dbReference>
<accession>Q9CED2</accession>